<accession>Q0SPE2</accession>
<accession>G0IQ52</accession>
<keyword id="KW-0067">ATP-binding</keyword>
<keyword id="KW-0963">Cytoplasm</keyword>
<keyword id="KW-0227">DNA damage</keyword>
<keyword id="KW-0233">DNA recombination</keyword>
<keyword id="KW-0234">DNA repair</keyword>
<keyword id="KW-0238">DNA-binding</keyword>
<keyword id="KW-0378">Hydrolase</keyword>
<keyword id="KW-0547">Nucleotide-binding</keyword>
<protein>
    <recommendedName>
        <fullName evidence="1">Holliday junction branch migration complex subunit RuvB</fullName>
        <ecNumber evidence="1">3.6.4.-</ecNumber>
    </recommendedName>
</protein>
<feature type="chain" id="PRO_0000322786" description="Holliday junction branch migration complex subunit RuvB">
    <location>
        <begin position="1"/>
        <end position="347"/>
    </location>
</feature>
<feature type="region of interest" description="Large ATPase domain (RuvB-L)" evidence="1">
    <location>
        <begin position="1"/>
        <end position="186"/>
    </location>
</feature>
<feature type="region of interest" description="Small ATPAse domain (RuvB-S)" evidence="1">
    <location>
        <begin position="187"/>
        <end position="257"/>
    </location>
</feature>
<feature type="region of interest" description="Head domain (RuvB-H)" evidence="1">
    <location>
        <begin position="260"/>
        <end position="347"/>
    </location>
</feature>
<feature type="binding site" evidence="1">
    <location>
        <position position="25"/>
    </location>
    <ligand>
        <name>ATP</name>
        <dbReference type="ChEBI" id="CHEBI:30616"/>
    </ligand>
</feature>
<feature type="binding site" evidence="1">
    <location>
        <position position="26"/>
    </location>
    <ligand>
        <name>ATP</name>
        <dbReference type="ChEBI" id="CHEBI:30616"/>
    </ligand>
</feature>
<feature type="binding site" evidence="1">
    <location>
        <position position="67"/>
    </location>
    <ligand>
        <name>ATP</name>
        <dbReference type="ChEBI" id="CHEBI:30616"/>
    </ligand>
</feature>
<feature type="binding site" evidence="1">
    <location>
        <position position="70"/>
    </location>
    <ligand>
        <name>ATP</name>
        <dbReference type="ChEBI" id="CHEBI:30616"/>
    </ligand>
</feature>
<feature type="binding site" evidence="1">
    <location>
        <position position="71"/>
    </location>
    <ligand>
        <name>ATP</name>
        <dbReference type="ChEBI" id="CHEBI:30616"/>
    </ligand>
</feature>
<feature type="binding site" evidence="1">
    <location>
        <position position="71"/>
    </location>
    <ligand>
        <name>Mg(2+)</name>
        <dbReference type="ChEBI" id="CHEBI:18420"/>
    </ligand>
</feature>
<feature type="binding site" evidence="1">
    <location>
        <position position="72"/>
    </location>
    <ligand>
        <name>ATP</name>
        <dbReference type="ChEBI" id="CHEBI:30616"/>
    </ligand>
</feature>
<feature type="binding site" evidence="1">
    <location>
        <begin position="133"/>
        <end position="135"/>
    </location>
    <ligand>
        <name>ATP</name>
        <dbReference type="ChEBI" id="CHEBI:30616"/>
    </ligand>
</feature>
<feature type="binding site" evidence="1">
    <location>
        <position position="176"/>
    </location>
    <ligand>
        <name>ATP</name>
        <dbReference type="ChEBI" id="CHEBI:30616"/>
    </ligand>
</feature>
<feature type="binding site" evidence="1">
    <location>
        <position position="186"/>
    </location>
    <ligand>
        <name>ATP</name>
        <dbReference type="ChEBI" id="CHEBI:30616"/>
    </ligand>
</feature>
<feature type="binding site" evidence="1">
    <location>
        <position position="223"/>
    </location>
    <ligand>
        <name>ATP</name>
        <dbReference type="ChEBI" id="CHEBI:30616"/>
    </ligand>
</feature>
<feature type="binding site" evidence="1">
    <location>
        <position position="315"/>
    </location>
    <ligand>
        <name>DNA</name>
        <dbReference type="ChEBI" id="CHEBI:16991"/>
    </ligand>
</feature>
<feature type="binding site" evidence="1">
    <location>
        <position position="320"/>
    </location>
    <ligand>
        <name>DNA</name>
        <dbReference type="ChEBI" id="CHEBI:16991"/>
    </ligand>
</feature>
<dbReference type="EC" id="3.6.4.-" evidence="1"/>
<dbReference type="EMBL" id="CP000395">
    <property type="protein sequence ID" value="ABH01286.1"/>
    <property type="molecule type" value="Genomic_DNA"/>
</dbReference>
<dbReference type="EMBL" id="CP002933">
    <property type="protein sequence ID" value="AEL69256.1"/>
    <property type="molecule type" value="Genomic_DNA"/>
</dbReference>
<dbReference type="RefSeq" id="WP_004790515.1">
    <property type="nucleotide sequence ID" value="NZ_CP160066.1"/>
</dbReference>
<dbReference type="SMR" id="Q0SPE2"/>
<dbReference type="STRING" id="29518.BLA32_04170"/>
<dbReference type="GeneID" id="77264866"/>
<dbReference type="KEGG" id="baf:BAPKO_0021"/>
<dbReference type="KEGG" id="bafz:BafPKo_0022"/>
<dbReference type="PATRIC" id="fig|390236.22.peg.22"/>
<dbReference type="eggNOG" id="COG2255">
    <property type="taxonomic scope" value="Bacteria"/>
</dbReference>
<dbReference type="HOGENOM" id="CLU_055599_1_0_12"/>
<dbReference type="OrthoDB" id="9804478at2"/>
<dbReference type="Proteomes" id="UP000005216">
    <property type="component" value="Chromosome"/>
</dbReference>
<dbReference type="GO" id="GO:0005737">
    <property type="term" value="C:cytoplasm"/>
    <property type="evidence" value="ECO:0007669"/>
    <property type="project" value="UniProtKB-SubCell"/>
</dbReference>
<dbReference type="GO" id="GO:0048476">
    <property type="term" value="C:Holliday junction resolvase complex"/>
    <property type="evidence" value="ECO:0007669"/>
    <property type="project" value="UniProtKB-UniRule"/>
</dbReference>
<dbReference type="GO" id="GO:0005524">
    <property type="term" value="F:ATP binding"/>
    <property type="evidence" value="ECO:0007669"/>
    <property type="project" value="UniProtKB-UniRule"/>
</dbReference>
<dbReference type="GO" id="GO:0016887">
    <property type="term" value="F:ATP hydrolysis activity"/>
    <property type="evidence" value="ECO:0007669"/>
    <property type="project" value="InterPro"/>
</dbReference>
<dbReference type="GO" id="GO:0000400">
    <property type="term" value="F:four-way junction DNA binding"/>
    <property type="evidence" value="ECO:0007669"/>
    <property type="project" value="UniProtKB-UniRule"/>
</dbReference>
<dbReference type="GO" id="GO:0009378">
    <property type="term" value="F:four-way junction helicase activity"/>
    <property type="evidence" value="ECO:0007669"/>
    <property type="project" value="InterPro"/>
</dbReference>
<dbReference type="GO" id="GO:0006310">
    <property type="term" value="P:DNA recombination"/>
    <property type="evidence" value="ECO:0007669"/>
    <property type="project" value="UniProtKB-UniRule"/>
</dbReference>
<dbReference type="GO" id="GO:0006281">
    <property type="term" value="P:DNA repair"/>
    <property type="evidence" value="ECO:0007669"/>
    <property type="project" value="UniProtKB-UniRule"/>
</dbReference>
<dbReference type="CDD" id="cd00009">
    <property type="entry name" value="AAA"/>
    <property type="match status" value="1"/>
</dbReference>
<dbReference type="Gene3D" id="1.10.8.60">
    <property type="match status" value="1"/>
</dbReference>
<dbReference type="Gene3D" id="3.40.50.300">
    <property type="entry name" value="P-loop containing nucleotide triphosphate hydrolases"/>
    <property type="match status" value="1"/>
</dbReference>
<dbReference type="Gene3D" id="1.10.10.10">
    <property type="entry name" value="Winged helix-like DNA-binding domain superfamily/Winged helix DNA-binding domain"/>
    <property type="match status" value="1"/>
</dbReference>
<dbReference type="HAMAP" id="MF_00016">
    <property type="entry name" value="DNA_HJ_migration_RuvB"/>
    <property type="match status" value="1"/>
</dbReference>
<dbReference type="InterPro" id="IPR003593">
    <property type="entry name" value="AAA+_ATPase"/>
</dbReference>
<dbReference type="InterPro" id="IPR041445">
    <property type="entry name" value="AAA_lid_4"/>
</dbReference>
<dbReference type="InterPro" id="IPR004605">
    <property type="entry name" value="DNA_helicase_Holl-junc_RuvB"/>
</dbReference>
<dbReference type="InterPro" id="IPR027417">
    <property type="entry name" value="P-loop_NTPase"/>
</dbReference>
<dbReference type="InterPro" id="IPR008824">
    <property type="entry name" value="RuvB-like_N"/>
</dbReference>
<dbReference type="InterPro" id="IPR008823">
    <property type="entry name" value="RuvB_C"/>
</dbReference>
<dbReference type="InterPro" id="IPR036388">
    <property type="entry name" value="WH-like_DNA-bd_sf"/>
</dbReference>
<dbReference type="InterPro" id="IPR036390">
    <property type="entry name" value="WH_DNA-bd_sf"/>
</dbReference>
<dbReference type="NCBIfam" id="NF000868">
    <property type="entry name" value="PRK00080.1"/>
    <property type="match status" value="1"/>
</dbReference>
<dbReference type="NCBIfam" id="TIGR00635">
    <property type="entry name" value="ruvB"/>
    <property type="match status" value="1"/>
</dbReference>
<dbReference type="PANTHER" id="PTHR42848">
    <property type="match status" value="1"/>
</dbReference>
<dbReference type="PANTHER" id="PTHR42848:SF1">
    <property type="entry name" value="HOLLIDAY JUNCTION BRANCH MIGRATION COMPLEX SUBUNIT RUVB"/>
    <property type="match status" value="1"/>
</dbReference>
<dbReference type="Pfam" id="PF17864">
    <property type="entry name" value="AAA_lid_4"/>
    <property type="match status" value="1"/>
</dbReference>
<dbReference type="Pfam" id="PF05491">
    <property type="entry name" value="RuvB_C"/>
    <property type="match status" value="1"/>
</dbReference>
<dbReference type="Pfam" id="PF05496">
    <property type="entry name" value="RuvB_N"/>
    <property type="match status" value="1"/>
</dbReference>
<dbReference type="SMART" id="SM00382">
    <property type="entry name" value="AAA"/>
    <property type="match status" value="1"/>
</dbReference>
<dbReference type="SUPFAM" id="SSF52540">
    <property type="entry name" value="P-loop containing nucleoside triphosphate hydrolases"/>
    <property type="match status" value="1"/>
</dbReference>
<dbReference type="SUPFAM" id="SSF46785">
    <property type="entry name" value="Winged helix' DNA-binding domain"/>
    <property type="match status" value="1"/>
</dbReference>
<reference key="1">
    <citation type="journal article" date="2006" name="BMC Genomics">
        <title>Comparative genome analysis: selection pressure on the Borrelia vls cassettes is essential for infectivity.</title>
        <authorList>
            <person name="Gloeckner G."/>
            <person name="Schulte-Spechtel U."/>
            <person name="Schilhabel M."/>
            <person name="Felder M."/>
            <person name="Suehnel J."/>
            <person name="Wilske B."/>
            <person name="Platzer M."/>
        </authorList>
    </citation>
    <scope>NUCLEOTIDE SEQUENCE [LARGE SCALE GENOMIC DNA]</scope>
    <source>
        <strain>PKo</strain>
    </source>
</reference>
<reference key="2">
    <citation type="journal article" date="2011" name="J. Bacteriol.">
        <title>Whole-genome sequences of two Borrelia afzelii and two Borrelia garinii Lyme disease agent isolates.</title>
        <authorList>
            <person name="Casjens S.R."/>
            <person name="Mongodin E.F."/>
            <person name="Qiu W.G."/>
            <person name="Dunn J.J."/>
            <person name="Luft B.J."/>
            <person name="Fraser-Liggett C.M."/>
            <person name="Schutzer S.E."/>
        </authorList>
    </citation>
    <scope>NUCLEOTIDE SEQUENCE [LARGE SCALE GENOMIC DNA]</scope>
    <source>
        <strain>PKo</strain>
    </source>
</reference>
<gene>
    <name evidence="1" type="primary">ruvB</name>
    <name type="ordered locus">BAPKO_0021</name>
    <name type="ordered locus">BafPKo_0022</name>
</gene>
<name>RUVB_BORAP</name>
<organism>
    <name type="scientific">Borreliella afzelii (strain PKo)</name>
    <name type="common">Borrelia afzelii</name>
    <dbReference type="NCBI Taxonomy" id="390236"/>
    <lineage>
        <taxon>Bacteria</taxon>
        <taxon>Pseudomonadati</taxon>
        <taxon>Spirochaetota</taxon>
        <taxon>Spirochaetia</taxon>
        <taxon>Spirochaetales</taxon>
        <taxon>Borreliaceae</taxon>
        <taxon>Borreliella</taxon>
    </lineage>
</organism>
<evidence type="ECO:0000255" key="1">
    <source>
        <dbReference type="HAMAP-Rule" id="MF_00016"/>
    </source>
</evidence>
<comment type="function">
    <text evidence="1">The RuvA-RuvB-RuvC complex processes Holliday junction (HJ) DNA during genetic recombination and DNA repair, while the RuvA-RuvB complex plays an important role in the rescue of blocked DNA replication forks via replication fork reversal (RFR). RuvA specifically binds to HJ cruciform DNA, conferring on it an open structure. The RuvB hexamer acts as an ATP-dependent pump, pulling dsDNA into and through the RuvAB complex. RuvB forms 2 homohexamers on either side of HJ DNA bound by 1 or 2 RuvA tetramers; 4 subunits per hexamer contact DNA at a time. Coordinated motions by a converter formed by DNA-disengaged RuvB subunits stimulates ATP hydrolysis and nucleotide exchange. Immobilization of the converter enables RuvB to convert the ATP-contained energy into a lever motion, pulling 2 nucleotides of DNA out of the RuvA tetramer per ATP hydrolyzed, thus driving DNA branch migration. The RuvB motors rotate together with the DNA substrate, which together with the progressing nucleotide cycle form the mechanistic basis for DNA recombination by continuous HJ branch migration. Branch migration allows RuvC to scan DNA until it finds its consensus sequence, where it cleaves and resolves cruciform DNA.</text>
</comment>
<comment type="catalytic activity">
    <reaction evidence="1">
        <text>ATP + H2O = ADP + phosphate + H(+)</text>
        <dbReference type="Rhea" id="RHEA:13065"/>
        <dbReference type="ChEBI" id="CHEBI:15377"/>
        <dbReference type="ChEBI" id="CHEBI:15378"/>
        <dbReference type="ChEBI" id="CHEBI:30616"/>
        <dbReference type="ChEBI" id="CHEBI:43474"/>
        <dbReference type="ChEBI" id="CHEBI:456216"/>
    </reaction>
</comment>
<comment type="subunit">
    <text evidence="1">Homohexamer. Forms an RuvA(8)-RuvB(12)-Holliday junction (HJ) complex. HJ DNA is sandwiched between 2 RuvA tetramers; dsDNA enters through RuvA and exits via RuvB. An RuvB hexamer assembles on each DNA strand where it exits the tetramer. Each RuvB hexamer is contacted by two RuvA subunits (via domain III) on 2 adjacent RuvB subunits; this complex drives branch migration. In the full resolvosome a probable DNA-RuvA(4)-RuvB(12)-RuvC(2) complex forms which resolves the HJ.</text>
</comment>
<comment type="subcellular location">
    <subcellularLocation>
        <location evidence="1">Cytoplasm</location>
    </subcellularLocation>
</comment>
<comment type="domain">
    <text evidence="1">Has 3 domains, the large (RuvB-L) and small ATPase (RuvB-S) domains and the C-terminal head (RuvB-H) domain. The head domain binds DNA, while the ATPase domains jointly bind ATP, ADP or are empty depending on the state of the subunit in the translocation cycle. During a single DNA translocation step the structure of each domain remains the same, but their relative positions change.</text>
</comment>
<comment type="similarity">
    <text evidence="1">Belongs to the RuvB family.</text>
</comment>
<sequence length="347" mass="39032">MKDENSINFLSSNENYLYDKSENELRPKVFEDFKGQANVKETLSIFIRASKERDEALDHVFLSGPPGLGKTTLASIIAFEMNASIKITSAPAFDKPKDIIGILTGLDEKSVLFIDEIHRLRPIIEEMLCIAMEDYELDWVIGQGANARTVRMPLPKFTLIGATTKPGKVTSPLYARFGITARFELYSEIELVEIIKRNSIILNIEIEEDAAFLLARSSRGTPRIANRLLRRIRDIAQVTGSLVVTSDIVAIGLEMLRIDGEGLDEQDRNILRSLILKFNGGPVGVDTLAISVGETADSLEDFYEPYLIMKGFISRTHRGRKATEFAYLHLNLEMKEDNLNENQRVSF</sequence>
<proteinExistence type="inferred from homology"/>